<protein>
    <recommendedName>
        <fullName>pH-response transcription factor pacC/RIM101</fullName>
    </recommendedName>
</protein>
<reference key="1">
    <citation type="journal article" date="2001" name="Mol. Genet. Genomics">
        <title>Functional analysis of promotor sequences of cephalosporin C biosynthesis genes from Acremonium chrysogenum: specific DNA-protein interactions and characterization of the transcription factor PACC.</title>
        <authorList>
            <person name="Schmitt E.K."/>
            <person name="Kempken R."/>
            <person name="Kueck U."/>
        </authorList>
    </citation>
    <scope>NUCLEOTIDE SEQUENCE [GENOMIC DNA]</scope>
    <scope>FUNCTION</scope>
    <scope>DNA-BINDING</scope>
</reference>
<evidence type="ECO:0000250" key="1"/>
<evidence type="ECO:0000255" key="2">
    <source>
        <dbReference type="PROSITE-ProRule" id="PRU00042"/>
    </source>
</evidence>
<evidence type="ECO:0000256" key="3">
    <source>
        <dbReference type="SAM" id="MobiDB-lite"/>
    </source>
</evidence>
<evidence type="ECO:0000269" key="4">
    <source>
    </source>
</evidence>
<evidence type="ECO:0000305" key="5"/>
<comment type="function">
    <text evidence="4">Transcription factor that mediates regulation of both acid- and alkaline-expressed genes in response to ambient pH. At alkaline ambient pH, activates transcription of alkaline-expressed genes (including pacC itself) and represses transcription of acid-expressed genes. Specifically recognizes and binds the consensus sequence 5'-GCCARG-3'.</text>
</comment>
<comment type="subunit">
    <text>Binds to DNA.</text>
</comment>
<comment type="subcellular location">
    <subcellularLocation>
        <location evidence="1">Cytoplasm</location>
    </subcellularLocation>
    <subcellularLocation>
        <location evidence="1">Nucleus</location>
    </subcellularLocation>
</comment>
<comment type="PTM">
    <text evidence="1">Activated by C-terminal proteolytic cleavage by signaling protease (probably palB/RIM13) at neutral to alkaline ambient pH.</text>
</comment>
<comment type="similarity">
    <text evidence="5">Belongs to the pacC/RIM101 family.</text>
</comment>
<organism>
    <name type="scientific">Hapsidospora chrysogena</name>
    <name type="common">Acremonium chrysogenum</name>
    <dbReference type="NCBI Taxonomy" id="5044"/>
    <lineage>
        <taxon>Eukaryota</taxon>
        <taxon>Fungi</taxon>
        <taxon>Dikarya</taxon>
        <taxon>Ascomycota</taxon>
        <taxon>Pezizomycotina</taxon>
        <taxon>Sordariomycetes</taxon>
        <taxon>Hypocreomycetidae</taxon>
        <taxon>Hypocreales</taxon>
        <taxon>Bionectriaceae</taxon>
        <taxon>Hapsidospora</taxon>
    </lineage>
</organism>
<accession>Q96X49</accession>
<keyword id="KW-0963">Cytoplasm</keyword>
<keyword id="KW-0479">Metal-binding</keyword>
<keyword id="KW-0539">Nucleus</keyword>
<keyword id="KW-0677">Repeat</keyword>
<keyword id="KW-0678">Repressor</keyword>
<keyword id="KW-0862">Zinc</keyword>
<keyword id="KW-0863">Zinc-finger</keyword>
<dbReference type="EMBL" id="AJ251521">
    <property type="protein sequence ID" value="CAC38840.1"/>
    <property type="molecule type" value="Genomic_DNA"/>
</dbReference>
<dbReference type="GO" id="GO:0005737">
    <property type="term" value="C:cytoplasm"/>
    <property type="evidence" value="ECO:0007669"/>
    <property type="project" value="UniProtKB-SubCell"/>
</dbReference>
<dbReference type="GO" id="GO:0005634">
    <property type="term" value="C:nucleus"/>
    <property type="evidence" value="ECO:0007669"/>
    <property type="project" value="UniProtKB-SubCell"/>
</dbReference>
<dbReference type="GO" id="GO:0008270">
    <property type="term" value="F:zinc ion binding"/>
    <property type="evidence" value="ECO:0007669"/>
    <property type="project" value="UniProtKB-KW"/>
</dbReference>
<dbReference type="GO" id="GO:0045944">
    <property type="term" value="P:positive regulation of transcription by RNA polymerase II"/>
    <property type="evidence" value="ECO:0007669"/>
    <property type="project" value="TreeGrafter"/>
</dbReference>
<dbReference type="FunFam" id="3.30.160.60:FF:000458">
    <property type="entry name" value="pH-response transcription factor pacC/RIM101"/>
    <property type="match status" value="1"/>
</dbReference>
<dbReference type="FunFam" id="3.30.160.60:FF:001875">
    <property type="entry name" value="pH-response transcription factor pacC/RIM101"/>
    <property type="match status" value="1"/>
</dbReference>
<dbReference type="Gene3D" id="3.30.160.60">
    <property type="entry name" value="Classic Zinc Finger"/>
    <property type="match status" value="2"/>
</dbReference>
<dbReference type="InterPro" id="IPR050806">
    <property type="entry name" value="pacC/RIM101"/>
</dbReference>
<dbReference type="InterPro" id="IPR036236">
    <property type="entry name" value="Znf_C2H2_sf"/>
</dbReference>
<dbReference type="InterPro" id="IPR013087">
    <property type="entry name" value="Znf_C2H2_type"/>
</dbReference>
<dbReference type="PANTHER" id="PTHR47257">
    <property type="entry name" value="PH-RESPONSE TRANSCRIPTION FACTOR PACC/RIM101"/>
    <property type="match status" value="1"/>
</dbReference>
<dbReference type="PANTHER" id="PTHR47257:SF1">
    <property type="entry name" value="PH-RESPONSE TRANSCRIPTION FACTOR PACC_RIM101"/>
    <property type="match status" value="1"/>
</dbReference>
<dbReference type="Pfam" id="PF00096">
    <property type="entry name" value="zf-C2H2"/>
    <property type="match status" value="1"/>
</dbReference>
<dbReference type="SMART" id="SM00355">
    <property type="entry name" value="ZnF_C2H2"/>
    <property type="match status" value="3"/>
</dbReference>
<dbReference type="SUPFAM" id="SSF57667">
    <property type="entry name" value="beta-beta-alpha zinc fingers"/>
    <property type="match status" value="2"/>
</dbReference>
<dbReference type="PROSITE" id="PS00028">
    <property type="entry name" value="ZINC_FINGER_C2H2_1"/>
    <property type="match status" value="2"/>
</dbReference>
<dbReference type="PROSITE" id="PS50157">
    <property type="entry name" value="ZINC_FINGER_C2H2_2"/>
    <property type="match status" value="3"/>
</dbReference>
<name>PACC_HAPCH</name>
<gene>
    <name type="primary">pacC</name>
</gene>
<feature type="chain" id="PRO_0000046827" description="pH-response transcription factor pacC/RIM101">
    <location>
        <begin position="1"/>
        <end position="621"/>
    </location>
</feature>
<feature type="zinc finger region" description="C2H2-type 1" evidence="2">
    <location>
        <begin position="53"/>
        <end position="78"/>
    </location>
</feature>
<feature type="zinc finger region" description="C2H2-type 2" evidence="2">
    <location>
        <begin position="89"/>
        <end position="113"/>
    </location>
</feature>
<feature type="zinc finger region" description="C2H2-type 3" evidence="2">
    <location>
        <begin position="119"/>
        <end position="141"/>
    </location>
</feature>
<feature type="region of interest" description="Disordered" evidence="3">
    <location>
        <begin position="1"/>
        <end position="40"/>
    </location>
</feature>
<feature type="region of interest" description="Disordered" evidence="3">
    <location>
        <begin position="353"/>
        <end position="388"/>
    </location>
</feature>
<feature type="region of interest" description="Disordered" evidence="3">
    <location>
        <begin position="400"/>
        <end position="532"/>
    </location>
</feature>
<feature type="region of interest" description="Disordered" evidence="3">
    <location>
        <begin position="565"/>
        <end position="621"/>
    </location>
</feature>
<feature type="short sequence motif" description="YPX[LI] motif 1">
    <location>
        <begin position="445"/>
        <end position="448"/>
    </location>
</feature>
<feature type="short sequence motif" description="YPX[LI] motif 2">
    <location>
        <begin position="613"/>
        <end position="616"/>
    </location>
</feature>
<feature type="compositionally biased region" description="Low complexity" evidence="3">
    <location>
        <begin position="8"/>
        <end position="26"/>
    </location>
</feature>
<feature type="compositionally biased region" description="Polar residues" evidence="3">
    <location>
        <begin position="400"/>
        <end position="421"/>
    </location>
</feature>
<feature type="compositionally biased region" description="Low complexity" evidence="3">
    <location>
        <begin position="422"/>
        <end position="432"/>
    </location>
</feature>
<feature type="compositionally biased region" description="Polar residues" evidence="3">
    <location>
        <begin position="433"/>
        <end position="472"/>
    </location>
</feature>
<feature type="compositionally biased region" description="Low complexity" evidence="3">
    <location>
        <begin position="511"/>
        <end position="525"/>
    </location>
</feature>
<feature type="compositionally biased region" description="Basic and acidic residues" evidence="3">
    <location>
        <begin position="565"/>
        <end position="608"/>
    </location>
</feature>
<sequence length="621" mass="68151">MSPPAPDAQPSSGSSSDNSNADSKSTTPPPPSSTTSTTSAAAISAAVVPDDNLTCRWNACNQKFPNPETLYDHICERHVGRKSTNNLNLTCQWNSCRTTTVKRDHITSHIRVHVPLKPHKCEFCGKSFKRPQDLKKHVKTHADDSVLVRPSQDNHNQGGMNYRPHLNKTPSYYDHNGQMRTQYQHHQPAHPNAYYAPQPSTNYGLYFNQPPLNNHQRTEHLGYGAPPGGYDRKRAFDMVDDFFSSAKRREIDPSSYSQIGRSLLPLHGTLSIPSGPMPATEQHYVPQPQHAGIAHAGPAPTQNPLAQQYYLPMPPNARTQKDLVQIDNLLGQMQDTIYENANHATAGVQIHHGHDHYSGYRSSQSPPIAQRGSPGGMPVGPDGYHQPVSAATMASPLTAMSSTGTPAVTPPSSAVSYTSGHSPSPSAPAMSPQSRHSSTSGSVMYPSLPTSLPAVSQGFGQSTTTTLGPSFESNERRRYSGGMLQRARAAPPRSTDNHNHNHNHGASTPKAPVSPALASPSSEVSDVSEATREREEQYDRWLENMRVIESLREYVRGRLERREYVEEQENEHQGQGEAARKERDGNPMDVDARSPRSPAREQPGRPREGSSLYPILRMPGD</sequence>
<proteinExistence type="evidence at protein level"/>